<keyword id="KW-0028">Amino-acid biosynthesis</keyword>
<keyword id="KW-0057">Aromatic amino acid biosynthesis</keyword>
<keyword id="KW-0456">Lyase</keyword>
<comment type="function">
    <text evidence="1">Catalyzes a trans-dehydration via an enolate intermediate.</text>
</comment>
<comment type="catalytic activity">
    <reaction evidence="1">
        <text>3-dehydroquinate = 3-dehydroshikimate + H2O</text>
        <dbReference type="Rhea" id="RHEA:21096"/>
        <dbReference type="ChEBI" id="CHEBI:15377"/>
        <dbReference type="ChEBI" id="CHEBI:16630"/>
        <dbReference type="ChEBI" id="CHEBI:32364"/>
        <dbReference type="EC" id="4.2.1.10"/>
    </reaction>
</comment>
<comment type="pathway">
    <text evidence="1">Metabolic intermediate biosynthesis; chorismate biosynthesis; chorismate from D-erythrose 4-phosphate and phosphoenolpyruvate: step 3/7.</text>
</comment>
<comment type="subunit">
    <text evidence="1">Homododecamer.</text>
</comment>
<comment type="similarity">
    <text evidence="1">Belongs to the type-II 3-dehydroquinase family.</text>
</comment>
<reference key="1">
    <citation type="submission" date="2006-08" db="EMBL/GenBank/DDBJ databases">
        <title>Complete sequence of Shewanella sp. MR-4.</title>
        <authorList>
            <consortium name="US DOE Joint Genome Institute"/>
            <person name="Copeland A."/>
            <person name="Lucas S."/>
            <person name="Lapidus A."/>
            <person name="Barry K."/>
            <person name="Detter J.C."/>
            <person name="Glavina del Rio T."/>
            <person name="Hammon N."/>
            <person name="Israni S."/>
            <person name="Dalin E."/>
            <person name="Tice H."/>
            <person name="Pitluck S."/>
            <person name="Kiss H."/>
            <person name="Brettin T."/>
            <person name="Bruce D."/>
            <person name="Han C."/>
            <person name="Tapia R."/>
            <person name="Gilna P."/>
            <person name="Schmutz J."/>
            <person name="Larimer F."/>
            <person name="Land M."/>
            <person name="Hauser L."/>
            <person name="Kyrpides N."/>
            <person name="Mikhailova N."/>
            <person name="Nealson K."/>
            <person name="Konstantinidis K."/>
            <person name="Klappenbach J."/>
            <person name="Tiedje J."/>
            <person name="Richardson P."/>
        </authorList>
    </citation>
    <scope>NUCLEOTIDE SEQUENCE [LARGE SCALE GENOMIC DNA]</scope>
    <source>
        <strain>MR-4</strain>
    </source>
</reference>
<gene>
    <name evidence="1" type="primary">aroQ</name>
    <name type="ordered locus">Shewmr4_0511</name>
</gene>
<evidence type="ECO:0000255" key="1">
    <source>
        <dbReference type="HAMAP-Rule" id="MF_00169"/>
    </source>
</evidence>
<proteinExistence type="inferred from homology"/>
<feature type="chain" id="PRO_1000023515" description="3-dehydroquinate dehydratase">
    <location>
        <begin position="1"/>
        <end position="144"/>
    </location>
</feature>
<feature type="active site" description="Proton acceptor" evidence="1">
    <location>
        <position position="24"/>
    </location>
</feature>
<feature type="active site" description="Proton donor" evidence="1">
    <location>
        <position position="99"/>
    </location>
</feature>
<feature type="binding site" evidence="1">
    <location>
        <position position="73"/>
    </location>
    <ligand>
        <name>substrate</name>
    </ligand>
</feature>
<feature type="binding site" evidence="1">
    <location>
        <position position="79"/>
    </location>
    <ligand>
        <name>substrate</name>
    </ligand>
</feature>
<feature type="binding site" evidence="1">
    <location>
        <position position="86"/>
    </location>
    <ligand>
        <name>substrate</name>
    </ligand>
</feature>
<feature type="binding site" evidence="1">
    <location>
        <begin position="100"/>
        <end position="101"/>
    </location>
    <ligand>
        <name>substrate</name>
    </ligand>
</feature>
<feature type="binding site" evidence="1">
    <location>
        <position position="110"/>
    </location>
    <ligand>
        <name>substrate</name>
    </ligand>
</feature>
<feature type="site" description="Transition state stabilizer" evidence="1">
    <location>
        <position position="19"/>
    </location>
</feature>
<protein>
    <recommendedName>
        <fullName evidence="1">3-dehydroquinate dehydratase</fullName>
        <shortName evidence="1">3-dehydroquinase</shortName>
        <ecNumber evidence="1">4.2.1.10</ecNumber>
    </recommendedName>
    <alternativeName>
        <fullName evidence="1">Type II DHQase</fullName>
    </alternativeName>
</protein>
<sequence>MNHKVLLINGPNLNLLGRREPSVYGHQTLADIVATLSEQAQAAGVELEHIQSNAEFELINAIHATDAQMIIINPAAFTHTSVALRDALLGVDIPFFEVHLSNVHAREPFRHHSYLSDKAIGVICGFGAQGYEFALAAAIKRLKA</sequence>
<organism>
    <name type="scientific">Shewanella sp. (strain MR-4)</name>
    <dbReference type="NCBI Taxonomy" id="60480"/>
    <lineage>
        <taxon>Bacteria</taxon>
        <taxon>Pseudomonadati</taxon>
        <taxon>Pseudomonadota</taxon>
        <taxon>Gammaproteobacteria</taxon>
        <taxon>Alteromonadales</taxon>
        <taxon>Shewanellaceae</taxon>
        <taxon>Shewanella</taxon>
    </lineage>
</organism>
<name>AROQ_SHESM</name>
<accession>Q0HMX6</accession>
<dbReference type="EC" id="4.2.1.10" evidence="1"/>
<dbReference type="EMBL" id="CP000446">
    <property type="protein sequence ID" value="ABI37591.1"/>
    <property type="molecule type" value="Genomic_DNA"/>
</dbReference>
<dbReference type="RefSeq" id="WP_011621313.1">
    <property type="nucleotide sequence ID" value="NC_008321.1"/>
</dbReference>
<dbReference type="SMR" id="Q0HMX6"/>
<dbReference type="KEGG" id="she:Shewmr4_0511"/>
<dbReference type="HOGENOM" id="CLU_090968_1_0_6"/>
<dbReference type="UniPathway" id="UPA00053">
    <property type="reaction ID" value="UER00086"/>
</dbReference>
<dbReference type="GO" id="GO:0003855">
    <property type="term" value="F:3-dehydroquinate dehydratase activity"/>
    <property type="evidence" value="ECO:0007669"/>
    <property type="project" value="UniProtKB-UniRule"/>
</dbReference>
<dbReference type="GO" id="GO:0008652">
    <property type="term" value="P:amino acid biosynthetic process"/>
    <property type="evidence" value="ECO:0007669"/>
    <property type="project" value="UniProtKB-KW"/>
</dbReference>
<dbReference type="GO" id="GO:0009073">
    <property type="term" value="P:aromatic amino acid family biosynthetic process"/>
    <property type="evidence" value="ECO:0007669"/>
    <property type="project" value="UniProtKB-KW"/>
</dbReference>
<dbReference type="GO" id="GO:0009423">
    <property type="term" value="P:chorismate biosynthetic process"/>
    <property type="evidence" value="ECO:0007669"/>
    <property type="project" value="UniProtKB-UniRule"/>
</dbReference>
<dbReference type="GO" id="GO:0019631">
    <property type="term" value="P:quinate catabolic process"/>
    <property type="evidence" value="ECO:0007669"/>
    <property type="project" value="TreeGrafter"/>
</dbReference>
<dbReference type="CDD" id="cd00466">
    <property type="entry name" value="DHQase_II"/>
    <property type="match status" value="1"/>
</dbReference>
<dbReference type="Gene3D" id="3.40.50.9100">
    <property type="entry name" value="Dehydroquinase, class II"/>
    <property type="match status" value="1"/>
</dbReference>
<dbReference type="HAMAP" id="MF_00169">
    <property type="entry name" value="AroQ"/>
    <property type="match status" value="1"/>
</dbReference>
<dbReference type="InterPro" id="IPR001874">
    <property type="entry name" value="DHquinase_II"/>
</dbReference>
<dbReference type="InterPro" id="IPR018509">
    <property type="entry name" value="DHquinase_II_CS"/>
</dbReference>
<dbReference type="InterPro" id="IPR036441">
    <property type="entry name" value="DHquinase_II_sf"/>
</dbReference>
<dbReference type="NCBIfam" id="TIGR01088">
    <property type="entry name" value="aroQ"/>
    <property type="match status" value="1"/>
</dbReference>
<dbReference type="NCBIfam" id="NF003804">
    <property type="entry name" value="PRK05395.1-1"/>
    <property type="match status" value="1"/>
</dbReference>
<dbReference type="NCBIfam" id="NF003805">
    <property type="entry name" value="PRK05395.1-2"/>
    <property type="match status" value="1"/>
</dbReference>
<dbReference type="NCBIfam" id="NF003806">
    <property type="entry name" value="PRK05395.1-3"/>
    <property type="match status" value="1"/>
</dbReference>
<dbReference type="NCBIfam" id="NF003807">
    <property type="entry name" value="PRK05395.1-4"/>
    <property type="match status" value="1"/>
</dbReference>
<dbReference type="PANTHER" id="PTHR21272">
    <property type="entry name" value="CATABOLIC 3-DEHYDROQUINASE"/>
    <property type="match status" value="1"/>
</dbReference>
<dbReference type="PANTHER" id="PTHR21272:SF3">
    <property type="entry name" value="CATABOLIC 3-DEHYDROQUINASE"/>
    <property type="match status" value="1"/>
</dbReference>
<dbReference type="Pfam" id="PF01220">
    <property type="entry name" value="DHquinase_II"/>
    <property type="match status" value="1"/>
</dbReference>
<dbReference type="PIRSF" id="PIRSF001399">
    <property type="entry name" value="DHquinase_II"/>
    <property type="match status" value="1"/>
</dbReference>
<dbReference type="SUPFAM" id="SSF52304">
    <property type="entry name" value="Type II 3-dehydroquinate dehydratase"/>
    <property type="match status" value="1"/>
</dbReference>
<dbReference type="PROSITE" id="PS01029">
    <property type="entry name" value="DEHYDROQUINASE_II"/>
    <property type="match status" value="1"/>
</dbReference>